<proteinExistence type="predicted"/>
<accession>P64629</accession>
<accession>P45538</accession>
<gene>
    <name type="primary">yhfL</name>
    <name type="ordered locus">Z4730</name>
    <name type="ordered locus">ECs4220</name>
</gene>
<organism>
    <name type="scientific">Escherichia coli O157:H7</name>
    <dbReference type="NCBI Taxonomy" id="83334"/>
    <lineage>
        <taxon>Bacteria</taxon>
        <taxon>Pseudomonadati</taxon>
        <taxon>Pseudomonadota</taxon>
        <taxon>Gammaproteobacteria</taxon>
        <taxon>Enterobacterales</taxon>
        <taxon>Enterobacteriaceae</taxon>
        <taxon>Escherichia</taxon>
    </lineage>
</organism>
<feature type="chain" id="PRO_0000169525" description="Uncharacterized protein YhfL">
    <location>
        <begin position="1"/>
        <end position="55"/>
    </location>
</feature>
<feature type="transmembrane region" description="Helical" evidence="1">
    <location>
        <begin position="7"/>
        <end position="24"/>
    </location>
</feature>
<keyword id="KW-0472">Membrane</keyword>
<keyword id="KW-1185">Reference proteome</keyword>
<keyword id="KW-0812">Transmembrane</keyword>
<keyword id="KW-1133">Transmembrane helix</keyword>
<evidence type="ECO:0000255" key="1"/>
<evidence type="ECO:0000305" key="2"/>
<comment type="subcellular location">
    <subcellularLocation>
        <location evidence="2">Membrane</location>
        <topology evidence="2">Single-pass membrane protein</topology>
    </subcellularLocation>
</comment>
<protein>
    <recommendedName>
        <fullName>Uncharacterized protein YhfL</fullName>
    </recommendedName>
</protein>
<reference key="1">
    <citation type="journal article" date="2001" name="Nature">
        <title>Genome sequence of enterohaemorrhagic Escherichia coli O157:H7.</title>
        <authorList>
            <person name="Perna N.T."/>
            <person name="Plunkett G. III"/>
            <person name="Burland V."/>
            <person name="Mau B."/>
            <person name="Glasner J.D."/>
            <person name="Rose D.J."/>
            <person name="Mayhew G.F."/>
            <person name="Evans P.S."/>
            <person name="Gregor J."/>
            <person name="Kirkpatrick H.A."/>
            <person name="Posfai G."/>
            <person name="Hackett J."/>
            <person name="Klink S."/>
            <person name="Boutin A."/>
            <person name="Shao Y."/>
            <person name="Miller L."/>
            <person name="Grotbeck E.J."/>
            <person name="Davis N.W."/>
            <person name="Lim A."/>
            <person name="Dimalanta E.T."/>
            <person name="Potamousis K."/>
            <person name="Apodaca J."/>
            <person name="Anantharaman T.S."/>
            <person name="Lin J."/>
            <person name="Yen G."/>
            <person name="Schwartz D.C."/>
            <person name="Welch R.A."/>
            <person name="Blattner F.R."/>
        </authorList>
    </citation>
    <scope>NUCLEOTIDE SEQUENCE [LARGE SCALE GENOMIC DNA]</scope>
    <source>
        <strain>O157:H7 / EDL933 / ATCC 700927 / EHEC</strain>
    </source>
</reference>
<reference key="2">
    <citation type="journal article" date="2001" name="DNA Res.">
        <title>Complete genome sequence of enterohemorrhagic Escherichia coli O157:H7 and genomic comparison with a laboratory strain K-12.</title>
        <authorList>
            <person name="Hayashi T."/>
            <person name="Makino K."/>
            <person name="Ohnishi M."/>
            <person name="Kurokawa K."/>
            <person name="Ishii K."/>
            <person name="Yokoyama K."/>
            <person name="Han C.-G."/>
            <person name="Ohtsubo E."/>
            <person name="Nakayama K."/>
            <person name="Murata T."/>
            <person name="Tanaka M."/>
            <person name="Tobe T."/>
            <person name="Iida T."/>
            <person name="Takami H."/>
            <person name="Honda T."/>
            <person name="Sasakawa C."/>
            <person name="Ogasawara N."/>
            <person name="Yasunaga T."/>
            <person name="Kuhara S."/>
            <person name="Shiba T."/>
            <person name="Hattori M."/>
            <person name="Shinagawa H."/>
        </authorList>
    </citation>
    <scope>NUCLEOTIDE SEQUENCE [LARGE SCALE GENOMIC DNA]</scope>
    <source>
        <strain>O157:H7 / Sakai / RIMD 0509952 / EHEC</strain>
    </source>
</reference>
<dbReference type="EMBL" id="AE005174">
    <property type="protein sequence ID" value="AAG58477.1"/>
    <property type="molecule type" value="Genomic_DNA"/>
</dbReference>
<dbReference type="EMBL" id="BA000007">
    <property type="protein sequence ID" value="BAB37643.1"/>
    <property type="molecule type" value="Genomic_DNA"/>
</dbReference>
<dbReference type="PIR" id="A86002">
    <property type="entry name" value="A86002"/>
</dbReference>
<dbReference type="PIR" id="D91156">
    <property type="entry name" value="D91156"/>
</dbReference>
<dbReference type="RefSeq" id="NP_312247.1">
    <property type="nucleotide sequence ID" value="NC_002695.1"/>
</dbReference>
<dbReference type="RefSeq" id="WP_001031834.1">
    <property type="nucleotide sequence ID" value="NZ_VOAI01000004.1"/>
</dbReference>
<dbReference type="STRING" id="155864.Z4730"/>
<dbReference type="GeneID" id="915927"/>
<dbReference type="KEGG" id="ece:Z4730"/>
<dbReference type="KEGG" id="ecs:ECs_4220"/>
<dbReference type="PATRIC" id="fig|386585.9.peg.4405"/>
<dbReference type="eggNOG" id="ENOG5032ZRK">
    <property type="taxonomic scope" value="Bacteria"/>
</dbReference>
<dbReference type="HOGENOM" id="CLU_197401_0_0_6"/>
<dbReference type="OMA" id="CTGHIQN"/>
<dbReference type="Proteomes" id="UP000000558">
    <property type="component" value="Chromosome"/>
</dbReference>
<dbReference type="Proteomes" id="UP000002519">
    <property type="component" value="Chromosome"/>
</dbReference>
<dbReference type="GO" id="GO:0016020">
    <property type="term" value="C:membrane"/>
    <property type="evidence" value="ECO:0007669"/>
    <property type="project" value="UniProtKB-SubCell"/>
</dbReference>
<dbReference type="InterPro" id="IPR025318">
    <property type="entry name" value="DUF4223"/>
</dbReference>
<dbReference type="Pfam" id="PF13978">
    <property type="entry name" value="DUF4223"/>
    <property type="match status" value="1"/>
</dbReference>
<dbReference type="PROSITE" id="PS51257">
    <property type="entry name" value="PROKAR_LIPOPROTEIN"/>
    <property type="match status" value="1"/>
</dbReference>
<sequence>MNKFIKVALVGAVLATLTACTGHIENRDKNCSYDYLLHPAISISKIIGGCGPTAQ</sequence>
<name>YHFL_ECO57</name>